<protein>
    <recommendedName>
        <fullName evidence="1">Flotillin-like protein FloA</fullName>
    </recommendedName>
</protein>
<accession>Q723S2</accession>
<keyword id="KW-1003">Cell membrane</keyword>
<keyword id="KW-0472">Membrane</keyword>
<keyword id="KW-0812">Transmembrane</keyword>
<keyword id="KW-1133">Transmembrane helix</keyword>
<feature type="chain" id="PRO_0000232554" description="Flotillin-like protein FloA">
    <location>
        <begin position="1"/>
        <end position="314"/>
    </location>
</feature>
<feature type="transmembrane region" description="Helical" evidence="1">
    <location>
        <begin position="4"/>
        <end position="24"/>
    </location>
</feature>
<reference key="1">
    <citation type="journal article" date="2004" name="Nucleic Acids Res.">
        <title>Whole genome comparisons of serotype 4b and 1/2a strains of the food-borne pathogen Listeria monocytogenes reveal new insights into the core genome components of this species.</title>
        <authorList>
            <person name="Nelson K.E."/>
            <person name="Fouts D.E."/>
            <person name="Mongodin E.F."/>
            <person name="Ravel J."/>
            <person name="DeBoy R.T."/>
            <person name="Kolonay J.F."/>
            <person name="Rasko D.A."/>
            <person name="Angiuoli S.V."/>
            <person name="Gill S.R."/>
            <person name="Paulsen I.T."/>
            <person name="Peterson J.D."/>
            <person name="White O."/>
            <person name="Nelson W.C."/>
            <person name="Nierman W.C."/>
            <person name="Beanan M.J."/>
            <person name="Brinkac L.M."/>
            <person name="Daugherty S.C."/>
            <person name="Dodson R.J."/>
            <person name="Durkin A.S."/>
            <person name="Madupu R."/>
            <person name="Haft D.H."/>
            <person name="Selengut J."/>
            <person name="Van Aken S.E."/>
            <person name="Khouri H.M."/>
            <person name="Fedorova N."/>
            <person name="Forberger H.A."/>
            <person name="Tran B."/>
            <person name="Kathariou S."/>
            <person name="Wonderling L.D."/>
            <person name="Uhlich G.A."/>
            <person name="Bayles D.O."/>
            <person name="Luchansky J.B."/>
            <person name="Fraser C.M."/>
        </authorList>
    </citation>
    <scope>NUCLEOTIDE SEQUENCE [LARGE SCALE GENOMIC DNA]</scope>
    <source>
        <strain>F2365</strain>
    </source>
</reference>
<comment type="function">
    <text evidence="1">Found in functional membrane microdomains (FMM) that may be equivalent to eukaryotic membrane rafts. FMMs are highly dynamic and increase in number as cells age. Flotillins are thought to be important factors in membrane fluidity.</text>
</comment>
<comment type="subunit">
    <text evidence="1">Homooligomerizes.</text>
</comment>
<comment type="subcellular location">
    <subcellularLocation>
        <location evidence="1">Cell membrane</location>
        <topology evidence="1">Single-pass membrane protein</topology>
    </subcellularLocation>
    <subcellularLocation>
        <location evidence="1">Membrane raft</location>
        <topology evidence="1">Single-pass membrane protein</topology>
    </subcellularLocation>
</comment>
<comment type="similarity">
    <text evidence="1">Belongs to the flotillin-like FloA family.</text>
</comment>
<gene>
    <name evidence="1" type="primary">floA</name>
    <name type="ordered locus">LMOf2365_0404</name>
</gene>
<evidence type="ECO:0000255" key="1">
    <source>
        <dbReference type="HAMAP-Rule" id="MF_01562"/>
    </source>
</evidence>
<sequence>MTMIGPIIIAVLIIIFLIVFFTLVPVGLWISALSARVPVGLGTLIGMRLRRVVPSRVVKPLIKAVKAGLDLEVNQLESHYLAGGDVDNTVDALIAAHRANIELDFSRAAAIDLAGRDVLEAVQTSVTPKVIRTPEFTGVAQNGVEVKVITQITVQSNIERIVGGAGEDTVIARVGEAVVSTVGETREHTDVLENPNSISKKVQEQGLGDGTAYTILSIDIAEMRIGDNIKAKLDIEKANADMEVAQAAASKRKAEAIALEQENRAAVVAAEAEVPRALSRALEEGNLGVMDYYKMENVQSDTAMRESIAHEDEK</sequence>
<name>FLOA_LISMF</name>
<dbReference type="EMBL" id="AE017262">
    <property type="protein sequence ID" value="AAT03189.1"/>
    <property type="molecule type" value="Genomic_DNA"/>
</dbReference>
<dbReference type="RefSeq" id="WP_003723104.1">
    <property type="nucleotide sequence ID" value="NC_002973.6"/>
</dbReference>
<dbReference type="GeneID" id="93233861"/>
<dbReference type="KEGG" id="lmf:LMOf2365_0404"/>
<dbReference type="HOGENOM" id="CLU_836378_0_0_9"/>
<dbReference type="GO" id="GO:0045121">
    <property type="term" value="C:membrane raft"/>
    <property type="evidence" value="ECO:0007669"/>
    <property type="project" value="UniProtKB-SubCell"/>
</dbReference>
<dbReference type="GO" id="GO:0005886">
    <property type="term" value="C:plasma membrane"/>
    <property type="evidence" value="ECO:0007669"/>
    <property type="project" value="UniProtKB-SubCell"/>
</dbReference>
<dbReference type="HAMAP" id="MF_01562">
    <property type="entry name" value="FloA"/>
    <property type="match status" value="1"/>
</dbReference>
<dbReference type="InterPro" id="IPR022853">
    <property type="entry name" value="FloA"/>
</dbReference>
<dbReference type="NCBIfam" id="NF010186">
    <property type="entry name" value="PRK13665.1"/>
    <property type="match status" value="1"/>
</dbReference>
<dbReference type="Pfam" id="PF12127">
    <property type="entry name" value="FloA"/>
    <property type="match status" value="1"/>
</dbReference>
<organism>
    <name type="scientific">Listeria monocytogenes serotype 4b (strain F2365)</name>
    <dbReference type="NCBI Taxonomy" id="265669"/>
    <lineage>
        <taxon>Bacteria</taxon>
        <taxon>Bacillati</taxon>
        <taxon>Bacillota</taxon>
        <taxon>Bacilli</taxon>
        <taxon>Bacillales</taxon>
        <taxon>Listeriaceae</taxon>
        <taxon>Listeria</taxon>
    </lineage>
</organism>
<proteinExistence type="inferred from homology"/>